<feature type="chain" id="PRO_1000091812" description="2-dehydro-3-deoxyphosphooctonate aldolase">
    <location>
        <begin position="1"/>
        <end position="284"/>
    </location>
</feature>
<proteinExistence type="inferred from homology"/>
<name>KDSA_ECO5E</name>
<protein>
    <recommendedName>
        <fullName evidence="1">2-dehydro-3-deoxyphosphooctonate aldolase</fullName>
        <ecNumber evidence="1">2.5.1.55</ecNumber>
    </recommendedName>
    <alternativeName>
        <fullName evidence="1">3-deoxy-D-manno-octulosonic acid 8-phosphate synthase</fullName>
    </alternativeName>
    <alternativeName>
        <fullName evidence="1">KDO-8-phosphate synthase</fullName>
        <shortName evidence="1">KDO 8-P synthase</shortName>
        <shortName evidence="1">KDOPS</shortName>
    </alternativeName>
    <alternativeName>
        <fullName evidence="1">Phospho-2-dehydro-3-deoxyoctonate aldolase</fullName>
    </alternativeName>
</protein>
<gene>
    <name evidence="1" type="primary">kdsA</name>
    <name type="ordered locus">ECH74115_1696</name>
</gene>
<reference key="1">
    <citation type="journal article" date="2011" name="Proc. Natl. Acad. Sci. U.S.A.">
        <title>Genomic anatomy of Escherichia coli O157:H7 outbreaks.</title>
        <authorList>
            <person name="Eppinger M."/>
            <person name="Mammel M.K."/>
            <person name="Leclerc J.E."/>
            <person name="Ravel J."/>
            <person name="Cebula T.A."/>
        </authorList>
    </citation>
    <scope>NUCLEOTIDE SEQUENCE [LARGE SCALE GENOMIC DNA]</scope>
    <source>
        <strain>EC4115 / EHEC</strain>
    </source>
</reference>
<organism>
    <name type="scientific">Escherichia coli O157:H7 (strain EC4115 / EHEC)</name>
    <dbReference type="NCBI Taxonomy" id="444450"/>
    <lineage>
        <taxon>Bacteria</taxon>
        <taxon>Pseudomonadati</taxon>
        <taxon>Pseudomonadota</taxon>
        <taxon>Gammaproteobacteria</taxon>
        <taxon>Enterobacterales</taxon>
        <taxon>Enterobacteriaceae</taxon>
        <taxon>Escherichia</taxon>
    </lineage>
</organism>
<dbReference type="EC" id="2.5.1.55" evidence="1"/>
<dbReference type="EMBL" id="CP001164">
    <property type="protein sequence ID" value="ACI35438.1"/>
    <property type="molecule type" value="Genomic_DNA"/>
</dbReference>
<dbReference type="RefSeq" id="WP_000811067.1">
    <property type="nucleotide sequence ID" value="NC_011353.1"/>
</dbReference>
<dbReference type="SMR" id="B5YXN3"/>
<dbReference type="KEGG" id="ecf:ECH74115_1696"/>
<dbReference type="HOGENOM" id="CLU_036666_0_0_6"/>
<dbReference type="UniPathway" id="UPA00030"/>
<dbReference type="UniPathway" id="UPA00357">
    <property type="reaction ID" value="UER00474"/>
</dbReference>
<dbReference type="GO" id="GO:0005737">
    <property type="term" value="C:cytoplasm"/>
    <property type="evidence" value="ECO:0007669"/>
    <property type="project" value="UniProtKB-SubCell"/>
</dbReference>
<dbReference type="GO" id="GO:0008676">
    <property type="term" value="F:3-deoxy-8-phosphooctulonate synthase activity"/>
    <property type="evidence" value="ECO:0007669"/>
    <property type="project" value="UniProtKB-UniRule"/>
</dbReference>
<dbReference type="GO" id="GO:0019294">
    <property type="term" value="P:keto-3-deoxy-D-manno-octulosonic acid biosynthetic process"/>
    <property type="evidence" value="ECO:0007669"/>
    <property type="project" value="UniProtKB-UniRule"/>
</dbReference>
<dbReference type="FunFam" id="3.20.20.70:FF:000058">
    <property type="entry name" value="2-dehydro-3-deoxyphosphooctonate aldolase"/>
    <property type="match status" value="1"/>
</dbReference>
<dbReference type="Gene3D" id="3.20.20.70">
    <property type="entry name" value="Aldolase class I"/>
    <property type="match status" value="1"/>
</dbReference>
<dbReference type="HAMAP" id="MF_00056">
    <property type="entry name" value="KDO8P_synth"/>
    <property type="match status" value="1"/>
</dbReference>
<dbReference type="InterPro" id="IPR013785">
    <property type="entry name" value="Aldolase_TIM"/>
</dbReference>
<dbReference type="InterPro" id="IPR006218">
    <property type="entry name" value="DAHP1/KDSA"/>
</dbReference>
<dbReference type="InterPro" id="IPR006269">
    <property type="entry name" value="KDO8P_synthase"/>
</dbReference>
<dbReference type="NCBIfam" id="TIGR01362">
    <property type="entry name" value="KDO8P_synth"/>
    <property type="match status" value="1"/>
</dbReference>
<dbReference type="NCBIfam" id="NF003543">
    <property type="entry name" value="PRK05198.1"/>
    <property type="match status" value="1"/>
</dbReference>
<dbReference type="NCBIfam" id="NF009109">
    <property type="entry name" value="PRK12457.1"/>
    <property type="match status" value="1"/>
</dbReference>
<dbReference type="PANTHER" id="PTHR21057">
    <property type="entry name" value="PHOSPHO-2-DEHYDRO-3-DEOXYHEPTONATE ALDOLASE"/>
    <property type="match status" value="1"/>
</dbReference>
<dbReference type="Pfam" id="PF00793">
    <property type="entry name" value="DAHP_synth_1"/>
    <property type="match status" value="1"/>
</dbReference>
<dbReference type="SUPFAM" id="SSF51569">
    <property type="entry name" value="Aldolase"/>
    <property type="match status" value="1"/>
</dbReference>
<accession>B5YXN3</accession>
<evidence type="ECO:0000255" key="1">
    <source>
        <dbReference type="HAMAP-Rule" id="MF_00056"/>
    </source>
</evidence>
<keyword id="KW-0963">Cytoplasm</keyword>
<keyword id="KW-0448">Lipopolysaccharide biosynthesis</keyword>
<keyword id="KW-0808">Transferase</keyword>
<sequence length="284" mass="30861">MKQKVVSIGDINVANDLPFVLFGGMNVLESRDLAMRICEHYVTVTQKLGIPYVFKASFDKANRSSIHSYRGPGLEEGMKIFQELKQTFGVKIITDVHEPSQAQPVADVVDVIQLPAFLARQTDLVEAMAKTGAVINVKKPQFVSPGQMGNIVDKFKEGGNEKVILCDRGANFGYDNLVVDMLGFSIMKKVSGNSPVIFDVTHALQCRDPFGAASGGRRAQVAELARAGMAVGLAGLFIEAHPDPEHAKCDGPSALPLAKLEPFLRQMKAIDDLVKGFEELDTSK</sequence>
<comment type="catalytic activity">
    <reaction evidence="1">
        <text>D-arabinose 5-phosphate + phosphoenolpyruvate + H2O = 3-deoxy-alpha-D-manno-2-octulosonate-8-phosphate + phosphate</text>
        <dbReference type="Rhea" id="RHEA:14053"/>
        <dbReference type="ChEBI" id="CHEBI:15377"/>
        <dbReference type="ChEBI" id="CHEBI:43474"/>
        <dbReference type="ChEBI" id="CHEBI:57693"/>
        <dbReference type="ChEBI" id="CHEBI:58702"/>
        <dbReference type="ChEBI" id="CHEBI:85985"/>
        <dbReference type="EC" id="2.5.1.55"/>
    </reaction>
</comment>
<comment type="pathway">
    <text evidence="1">Carbohydrate biosynthesis; 3-deoxy-D-manno-octulosonate biosynthesis; 3-deoxy-D-manno-octulosonate from D-ribulose 5-phosphate: step 2/3.</text>
</comment>
<comment type="pathway">
    <text evidence="1">Bacterial outer membrane biogenesis; lipopolysaccharide biosynthesis.</text>
</comment>
<comment type="subcellular location">
    <subcellularLocation>
        <location evidence="1">Cytoplasm</location>
    </subcellularLocation>
</comment>
<comment type="similarity">
    <text evidence="1">Belongs to the KdsA family.</text>
</comment>